<proteinExistence type="inferred from homology"/>
<organism>
    <name type="scientific">Neurospora crassa (strain ATCC 24698 / 74-OR23-1A / CBS 708.71 / DSM 1257 / FGSC 987)</name>
    <dbReference type="NCBI Taxonomy" id="367110"/>
    <lineage>
        <taxon>Eukaryota</taxon>
        <taxon>Fungi</taxon>
        <taxon>Dikarya</taxon>
        <taxon>Ascomycota</taxon>
        <taxon>Pezizomycotina</taxon>
        <taxon>Sordariomycetes</taxon>
        <taxon>Sordariomycetidae</taxon>
        <taxon>Sordariales</taxon>
        <taxon>Sordariaceae</taxon>
        <taxon>Neurospora</taxon>
    </lineage>
</organism>
<sequence length="429" mass="47726">MADNDSISVRISEDCPPEIQRMLTAAWAHDVDTVKKLIDTPEVARGQDPKTGESPLHAAIRSCGAPSEDDTPEDHEKAKATVSELLMWGAIWNDVDNNNETPGCVAARLNRPELYELCVNAGVRAEMLFGLMDGYEALDSDDEDDEEMAEGEEAQAEDGEEAPELVAAEEATQTAEEETPAVFQPPAVNLEEQVTSDKYLRSTVAYSDGKLVDDAGNGVMMAWETDIMRRSVDALLPNKEPGKRILNIGFGMGIIDGMFAETKPAVHHIIEAHPEVLEYISTPESKFDSTWEESGPAPGAYRVWEGKWQQIGLQLLEEGHVYDAIYFDTFGEDYGQLRMFFTEYIPGLLDSNGIFGFFNGLGADRQICYDVYTKVAEMHLADAGLDVEWKEIPVDMKELAEADKDGWEGVKRRYWTLDTYRLPVCTFLG</sequence>
<dbReference type="EC" id="2.1.1.-" evidence="1"/>
<dbReference type="EMBL" id="CM002236">
    <property type="protein sequence ID" value="EAA34605.1"/>
    <property type="molecule type" value="Genomic_DNA"/>
</dbReference>
<dbReference type="RefSeq" id="XP_963841.1">
    <property type="nucleotide sequence ID" value="XM_958748.1"/>
</dbReference>
<dbReference type="SMR" id="Q7SCW9"/>
<dbReference type="FunCoup" id="Q7SCW9">
    <property type="interactions" value="372"/>
</dbReference>
<dbReference type="STRING" id="367110.Q7SCW9"/>
<dbReference type="PaxDb" id="5141-EFNCRP00000009630"/>
<dbReference type="EnsemblFungi" id="EAA34605">
    <property type="protein sequence ID" value="EAA34605"/>
    <property type="gene ID" value="NCU08111"/>
</dbReference>
<dbReference type="GeneID" id="3879990"/>
<dbReference type="KEGG" id="ncr:NCU08111"/>
<dbReference type="VEuPathDB" id="FungiDB:NCU08111"/>
<dbReference type="HOGENOM" id="CLU_033831_0_1_1"/>
<dbReference type="InParanoid" id="Q7SCW9"/>
<dbReference type="OMA" id="YWVVDNY"/>
<dbReference type="OrthoDB" id="19014at2759"/>
<dbReference type="Proteomes" id="UP000001805">
    <property type="component" value="Chromosome 1, Linkage Group I"/>
</dbReference>
<dbReference type="GO" id="GO:0005737">
    <property type="term" value="C:cytoplasm"/>
    <property type="evidence" value="ECO:0000318"/>
    <property type="project" value="GO_Central"/>
</dbReference>
<dbReference type="GO" id="GO:0005634">
    <property type="term" value="C:nucleus"/>
    <property type="evidence" value="ECO:0000318"/>
    <property type="project" value="GO_Central"/>
</dbReference>
<dbReference type="GO" id="GO:0019702">
    <property type="term" value="F:protein arginine N5-methyltransferase activity"/>
    <property type="evidence" value="ECO:0000318"/>
    <property type="project" value="GO_Central"/>
</dbReference>
<dbReference type="GO" id="GO:0032259">
    <property type="term" value="P:methylation"/>
    <property type="evidence" value="ECO:0007669"/>
    <property type="project" value="UniProtKB-KW"/>
</dbReference>
<dbReference type="FunFam" id="1.25.40.20:FF:000394">
    <property type="entry name" value="Arginine N-methyltransferase 2"/>
    <property type="match status" value="1"/>
</dbReference>
<dbReference type="FunFam" id="3.40.50.150:FF:000135">
    <property type="entry name" value="Arginine N-methyltransferase 2"/>
    <property type="match status" value="1"/>
</dbReference>
<dbReference type="Gene3D" id="1.25.40.20">
    <property type="entry name" value="Ankyrin repeat-containing domain"/>
    <property type="match status" value="1"/>
</dbReference>
<dbReference type="Gene3D" id="3.40.50.150">
    <property type="entry name" value="Vaccinia Virus protein VP39"/>
    <property type="match status" value="1"/>
</dbReference>
<dbReference type="InterPro" id="IPR036770">
    <property type="entry name" value="Ankyrin_rpt-contain_sf"/>
</dbReference>
<dbReference type="InterPro" id="IPR017408">
    <property type="entry name" value="Arginine_N-MeTrfase_2"/>
</dbReference>
<dbReference type="InterPro" id="IPR051038">
    <property type="entry name" value="RMT2/GAMT_Mtase"/>
</dbReference>
<dbReference type="InterPro" id="IPR026480">
    <property type="entry name" value="RMT2_dom"/>
</dbReference>
<dbReference type="InterPro" id="IPR029063">
    <property type="entry name" value="SAM-dependent_MTases_sf"/>
</dbReference>
<dbReference type="PANTHER" id="PTHR32379">
    <property type="entry name" value="GUANIDINOACETATE N-METHYLTRANSFERASE"/>
    <property type="match status" value="1"/>
</dbReference>
<dbReference type="PANTHER" id="PTHR32379:SF1">
    <property type="entry name" value="GUANIDINOACETATE N-METHYLTRANSFERASE"/>
    <property type="match status" value="1"/>
</dbReference>
<dbReference type="PIRSF" id="PIRSF038148">
    <property type="entry name" value="Arginine_N-mtfrase-2"/>
    <property type="match status" value="1"/>
</dbReference>
<dbReference type="SUPFAM" id="SSF48403">
    <property type="entry name" value="Ankyrin repeat"/>
    <property type="match status" value="1"/>
</dbReference>
<dbReference type="SUPFAM" id="SSF53335">
    <property type="entry name" value="S-adenosyl-L-methionine-dependent methyltransferases"/>
    <property type="match status" value="1"/>
</dbReference>
<dbReference type="PROSITE" id="PS51559">
    <property type="entry name" value="SAM_RMT2"/>
    <property type="match status" value="1"/>
</dbReference>
<gene>
    <name evidence="4" type="primary">ant-1</name>
    <name evidence="1" type="synonym">rmt2</name>
    <name type="ORF">NCU08111</name>
</gene>
<keyword id="KW-0963">Cytoplasm</keyword>
<keyword id="KW-0489">Methyltransferase</keyword>
<keyword id="KW-0539">Nucleus</keyword>
<keyword id="KW-1185">Reference proteome</keyword>
<keyword id="KW-0949">S-adenosyl-L-methionine</keyword>
<keyword id="KW-0808">Transferase</keyword>
<comment type="function">
    <text evidence="1">S-adenosyl-L-methionine-dependent protein-arginine N-methyltransferase that methylates the delta-nitrogen atom of arginine residues to form N5-methylarginine (type IV) in target proteins. Monomethylates ribosomal protein L12.</text>
</comment>
<comment type="subunit">
    <text evidence="1">Monomer.</text>
</comment>
<comment type="subcellular location">
    <subcellularLocation>
        <location evidence="1">Cytoplasm</location>
    </subcellularLocation>
    <subcellularLocation>
        <location evidence="1">Nucleus</location>
    </subcellularLocation>
</comment>
<comment type="similarity">
    <text evidence="2">Belongs to the class I-like SAM-binding methyltransferase superfamily. RMT2 methyltransferase family.</text>
</comment>
<accession>Q7SCW9</accession>
<reference key="1">
    <citation type="journal article" date="2003" name="Nature">
        <title>The genome sequence of the filamentous fungus Neurospora crassa.</title>
        <authorList>
            <person name="Galagan J.E."/>
            <person name="Calvo S.E."/>
            <person name="Borkovich K.A."/>
            <person name="Selker E.U."/>
            <person name="Read N.D."/>
            <person name="Jaffe D.B."/>
            <person name="FitzHugh W."/>
            <person name="Ma L.-J."/>
            <person name="Smirnov S."/>
            <person name="Purcell S."/>
            <person name="Rehman B."/>
            <person name="Elkins T."/>
            <person name="Engels R."/>
            <person name="Wang S."/>
            <person name="Nielsen C.B."/>
            <person name="Butler J."/>
            <person name="Endrizzi M."/>
            <person name="Qui D."/>
            <person name="Ianakiev P."/>
            <person name="Bell-Pedersen D."/>
            <person name="Nelson M.A."/>
            <person name="Werner-Washburne M."/>
            <person name="Selitrennikoff C.P."/>
            <person name="Kinsey J.A."/>
            <person name="Braun E.L."/>
            <person name="Zelter A."/>
            <person name="Schulte U."/>
            <person name="Kothe G.O."/>
            <person name="Jedd G."/>
            <person name="Mewes H.-W."/>
            <person name="Staben C."/>
            <person name="Marcotte E."/>
            <person name="Greenberg D."/>
            <person name="Roy A."/>
            <person name="Foley K."/>
            <person name="Naylor J."/>
            <person name="Stange-Thomann N."/>
            <person name="Barrett R."/>
            <person name="Gnerre S."/>
            <person name="Kamal M."/>
            <person name="Kamvysselis M."/>
            <person name="Mauceli E.W."/>
            <person name="Bielke C."/>
            <person name="Rudd S."/>
            <person name="Frishman D."/>
            <person name="Krystofova S."/>
            <person name="Rasmussen C."/>
            <person name="Metzenberg R.L."/>
            <person name="Perkins D.D."/>
            <person name="Kroken S."/>
            <person name="Cogoni C."/>
            <person name="Macino G."/>
            <person name="Catcheside D.E.A."/>
            <person name="Li W."/>
            <person name="Pratt R.J."/>
            <person name="Osmani S.A."/>
            <person name="DeSouza C.P.C."/>
            <person name="Glass N.L."/>
            <person name="Orbach M.J."/>
            <person name="Berglund J.A."/>
            <person name="Voelker R."/>
            <person name="Yarden O."/>
            <person name="Plamann M."/>
            <person name="Seiler S."/>
            <person name="Dunlap J.C."/>
            <person name="Radford A."/>
            <person name="Aramayo R."/>
            <person name="Natvig D.O."/>
            <person name="Alex L.A."/>
            <person name="Mannhaupt G."/>
            <person name="Ebbole D.J."/>
            <person name="Freitag M."/>
            <person name="Paulsen I."/>
            <person name="Sachs M.S."/>
            <person name="Lander E.S."/>
            <person name="Nusbaum C."/>
            <person name="Birren B.W."/>
        </authorList>
    </citation>
    <scope>NUCLEOTIDE SEQUENCE [LARGE SCALE GENOMIC DNA]</scope>
    <source>
        <strain>ATCC 24698 / 74-OR23-1A / CBS 708.71 / DSM 1257 / FGSC 987</strain>
    </source>
</reference>
<evidence type="ECO:0000250" key="1">
    <source>
        <dbReference type="UniProtKB" id="Q03305"/>
    </source>
</evidence>
<evidence type="ECO:0000255" key="2">
    <source>
        <dbReference type="PROSITE-ProRule" id="PRU00892"/>
    </source>
</evidence>
<evidence type="ECO:0000256" key="3">
    <source>
        <dbReference type="SAM" id="MobiDB-lite"/>
    </source>
</evidence>
<evidence type="ECO:0000305" key="4"/>
<name>RMT2_NEUCR</name>
<protein>
    <recommendedName>
        <fullName evidence="1">Protein arginine N-methyltransferase 2</fullName>
        <ecNumber evidence="1">2.1.1.-</ecNumber>
    </recommendedName>
    <alternativeName>
        <fullName evidence="4">Arginine N-methyltransferase 1</fullName>
    </alternativeName>
    <alternativeName>
        <fullName evidence="1">Protein-arginine N5-methyltransferase</fullName>
    </alternativeName>
    <alternativeName>
        <fullName evidence="1">Type IV protein arginine N-methyltransferase</fullName>
        <shortName evidence="1">Type IV PRMT</shortName>
    </alternativeName>
</protein>
<feature type="chain" id="PRO_0000228978" description="Protein arginine N-methyltransferase 2">
    <location>
        <begin position="1"/>
        <end position="429"/>
    </location>
</feature>
<feature type="domain" description="RMT2" evidence="2">
    <location>
        <begin position="190"/>
        <end position="429"/>
    </location>
</feature>
<feature type="region of interest" description="Disordered" evidence="3">
    <location>
        <begin position="41"/>
        <end position="76"/>
    </location>
</feature>
<feature type="region of interest" description="Disordered" evidence="3">
    <location>
        <begin position="137"/>
        <end position="180"/>
    </location>
</feature>
<feature type="compositionally biased region" description="Acidic residues" evidence="3">
    <location>
        <begin position="137"/>
        <end position="163"/>
    </location>
</feature>
<feature type="compositionally biased region" description="Low complexity" evidence="3">
    <location>
        <begin position="164"/>
        <end position="174"/>
    </location>
</feature>
<feature type="binding site" evidence="2">
    <location>
        <position position="199"/>
    </location>
    <ligand>
        <name>S-adenosyl-L-methionine</name>
        <dbReference type="ChEBI" id="CHEBI:59789"/>
    </ligand>
</feature>
<feature type="binding site" evidence="2">
    <location>
        <position position="228"/>
    </location>
    <ligand>
        <name>S-adenosyl-L-methionine</name>
        <dbReference type="ChEBI" id="CHEBI:59789"/>
    </ligand>
</feature>
<feature type="binding site" evidence="2">
    <location>
        <begin position="250"/>
        <end position="255"/>
    </location>
    <ligand>
        <name>S-adenosyl-L-methionine</name>
        <dbReference type="ChEBI" id="CHEBI:59789"/>
    </ligand>
</feature>
<feature type="binding site" evidence="2">
    <location>
        <begin position="271"/>
        <end position="273"/>
    </location>
    <ligand>
        <name>S-adenosyl-L-methionine</name>
        <dbReference type="ChEBI" id="CHEBI:59789"/>
    </ligand>
</feature>
<feature type="binding site" evidence="2">
    <location>
        <begin position="308"/>
        <end position="309"/>
    </location>
    <ligand>
        <name>S-adenosyl-L-methionine</name>
        <dbReference type="ChEBI" id="CHEBI:59789"/>
    </ligand>
</feature>
<feature type="binding site" evidence="2">
    <location>
        <position position="328"/>
    </location>
    <ligand>
        <name>S-adenosyl-L-methionine</name>
        <dbReference type="ChEBI" id="CHEBI:59789"/>
    </ligand>
</feature>